<evidence type="ECO:0000255" key="1">
    <source>
        <dbReference type="HAMAP-Rule" id="MF_00179"/>
    </source>
</evidence>
<sequence length="196" mass="21836">MQLKRVAEAKLPTPWGDFLMVGFEELATGHDHVALVYGDISGHTPVLARVHSECLTGDALFSLRCDCGFQLEAALTQIAEEGRGILLYHRQEGRNIGLLNKIRAYALQDQGYDTVEANHQLGFAADERDFTLCADMFKLLGVNEVRLLTNNPKKVEILTEAGINIVERVPLIVGRNPNNEHYLDTKAEKMGHLLNK</sequence>
<dbReference type="EC" id="3.5.4.25" evidence="1"/>
<dbReference type="EMBL" id="CP000038">
    <property type="protein sequence ID" value="AAZ88535.1"/>
    <property type="molecule type" value="Genomic_DNA"/>
</dbReference>
<dbReference type="RefSeq" id="WP_001176295.1">
    <property type="nucleotide sequence ID" value="NC_007384.1"/>
</dbReference>
<dbReference type="SMR" id="Q3Z127"/>
<dbReference type="GeneID" id="86946614"/>
<dbReference type="KEGG" id="ssn:SSON_1863"/>
<dbReference type="HOGENOM" id="CLU_020273_2_1_6"/>
<dbReference type="UniPathway" id="UPA00275">
    <property type="reaction ID" value="UER00400"/>
</dbReference>
<dbReference type="Proteomes" id="UP000002529">
    <property type="component" value="Chromosome"/>
</dbReference>
<dbReference type="GO" id="GO:0005829">
    <property type="term" value="C:cytosol"/>
    <property type="evidence" value="ECO:0007669"/>
    <property type="project" value="TreeGrafter"/>
</dbReference>
<dbReference type="GO" id="GO:0005525">
    <property type="term" value="F:GTP binding"/>
    <property type="evidence" value="ECO:0007669"/>
    <property type="project" value="UniProtKB-KW"/>
</dbReference>
<dbReference type="GO" id="GO:0003935">
    <property type="term" value="F:GTP cyclohydrolase II activity"/>
    <property type="evidence" value="ECO:0007669"/>
    <property type="project" value="UniProtKB-UniRule"/>
</dbReference>
<dbReference type="GO" id="GO:0008270">
    <property type="term" value="F:zinc ion binding"/>
    <property type="evidence" value="ECO:0007669"/>
    <property type="project" value="UniProtKB-UniRule"/>
</dbReference>
<dbReference type="GO" id="GO:0009231">
    <property type="term" value="P:riboflavin biosynthetic process"/>
    <property type="evidence" value="ECO:0007669"/>
    <property type="project" value="UniProtKB-UniRule"/>
</dbReference>
<dbReference type="CDD" id="cd00641">
    <property type="entry name" value="GTP_cyclohydro2"/>
    <property type="match status" value="1"/>
</dbReference>
<dbReference type="FunFam" id="3.40.50.10990:FF:000002">
    <property type="entry name" value="GTP cyclohydrolase-2"/>
    <property type="match status" value="1"/>
</dbReference>
<dbReference type="Gene3D" id="3.40.50.10990">
    <property type="entry name" value="GTP cyclohydrolase II"/>
    <property type="match status" value="1"/>
</dbReference>
<dbReference type="HAMAP" id="MF_00179">
    <property type="entry name" value="RibA"/>
    <property type="match status" value="1"/>
</dbReference>
<dbReference type="InterPro" id="IPR032677">
    <property type="entry name" value="GTP_cyclohydro_II"/>
</dbReference>
<dbReference type="InterPro" id="IPR000926">
    <property type="entry name" value="RibA"/>
</dbReference>
<dbReference type="InterPro" id="IPR036144">
    <property type="entry name" value="RibA-like_sf"/>
</dbReference>
<dbReference type="NCBIfam" id="NF001591">
    <property type="entry name" value="PRK00393.1"/>
    <property type="match status" value="1"/>
</dbReference>
<dbReference type="NCBIfam" id="TIGR00505">
    <property type="entry name" value="ribA"/>
    <property type="match status" value="1"/>
</dbReference>
<dbReference type="PANTHER" id="PTHR21327:SF18">
    <property type="entry name" value="3,4-DIHYDROXY-2-BUTANONE 4-PHOSPHATE SYNTHASE"/>
    <property type="match status" value="1"/>
</dbReference>
<dbReference type="PANTHER" id="PTHR21327">
    <property type="entry name" value="GTP CYCLOHYDROLASE II-RELATED"/>
    <property type="match status" value="1"/>
</dbReference>
<dbReference type="Pfam" id="PF00925">
    <property type="entry name" value="GTP_cyclohydro2"/>
    <property type="match status" value="1"/>
</dbReference>
<dbReference type="SUPFAM" id="SSF142695">
    <property type="entry name" value="RibA-like"/>
    <property type="match status" value="1"/>
</dbReference>
<organism>
    <name type="scientific">Shigella sonnei (strain Ss046)</name>
    <dbReference type="NCBI Taxonomy" id="300269"/>
    <lineage>
        <taxon>Bacteria</taxon>
        <taxon>Pseudomonadati</taxon>
        <taxon>Pseudomonadota</taxon>
        <taxon>Gammaproteobacteria</taxon>
        <taxon>Enterobacterales</taxon>
        <taxon>Enterobacteriaceae</taxon>
        <taxon>Shigella</taxon>
    </lineage>
</organism>
<name>RIBA_SHISS</name>
<reference key="1">
    <citation type="journal article" date="2005" name="Nucleic Acids Res.">
        <title>Genome dynamics and diversity of Shigella species, the etiologic agents of bacillary dysentery.</title>
        <authorList>
            <person name="Yang F."/>
            <person name="Yang J."/>
            <person name="Zhang X."/>
            <person name="Chen L."/>
            <person name="Jiang Y."/>
            <person name="Yan Y."/>
            <person name="Tang X."/>
            <person name="Wang J."/>
            <person name="Xiong Z."/>
            <person name="Dong J."/>
            <person name="Xue Y."/>
            <person name="Zhu Y."/>
            <person name="Xu X."/>
            <person name="Sun L."/>
            <person name="Chen S."/>
            <person name="Nie H."/>
            <person name="Peng J."/>
            <person name="Xu J."/>
            <person name="Wang Y."/>
            <person name="Yuan Z."/>
            <person name="Wen Y."/>
            <person name="Yao Z."/>
            <person name="Shen Y."/>
            <person name="Qiang B."/>
            <person name="Hou Y."/>
            <person name="Yu J."/>
            <person name="Jin Q."/>
        </authorList>
    </citation>
    <scope>NUCLEOTIDE SEQUENCE [LARGE SCALE GENOMIC DNA]</scope>
    <source>
        <strain>Ss046</strain>
    </source>
</reference>
<keyword id="KW-0342">GTP-binding</keyword>
<keyword id="KW-0378">Hydrolase</keyword>
<keyword id="KW-0479">Metal-binding</keyword>
<keyword id="KW-0547">Nucleotide-binding</keyword>
<keyword id="KW-1185">Reference proteome</keyword>
<keyword id="KW-0686">Riboflavin biosynthesis</keyword>
<keyword id="KW-0862">Zinc</keyword>
<accession>Q3Z127</accession>
<comment type="function">
    <text evidence="1">Catalyzes the conversion of GTP to 2,5-diamino-6-ribosylamino-4(3H)-pyrimidinone 5'-phosphate (DARP), formate and pyrophosphate.</text>
</comment>
<comment type="catalytic activity">
    <reaction evidence="1">
        <text>GTP + 4 H2O = 2,5-diamino-6-hydroxy-4-(5-phosphoribosylamino)-pyrimidine + formate + 2 phosphate + 3 H(+)</text>
        <dbReference type="Rhea" id="RHEA:23704"/>
        <dbReference type="ChEBI" id="CHEBI:15377"/>
        <dbReference type="ChEBI" id="CHEBI:15378"/>
        <dbReference type="ChEBI" id="CHEBI:15740"/>
        <dbReference type="ChEBI" id="CHEBI:37565"/>
        <dbReference type="ChEBI" id="CHEBI:43474"/>
        <dbReference type="ChEBI" id="CHEBI:58614"/>
        <dbReference type="EC" id="3.5.4.25"/>
    </reaction>
</comment>
<comment type="cofactor">
    <cofactor evidence="1">
        <name>Zn(2+)</name>
        <dbReference type="ChEBI" id="CHEBI:29105"/>
    </cofactor>
    <text evidence="1">Binds 1 zinc ion per subunit.</text>
</comment>
<comment type="pathway">
    <text evidence="1">Cofactor biosynthesis; riboflavin biosynthesis; 5-amino-6-(D-ribitylamino)uracil from GTP: step 1/4.</text>
</comment>
<comment type="subunit">
    <text evidence="1">Homodimer.</text>
</comment>
<comment type="similarity">
    <text evidence="1">Belongs to the GTP cyclohydrolase II family.</text>
</comment>
<protein>
    <recommendedName>
        <fullName evidence="1">GTP cyclohydrolase-2</fullName>
        <ecNumber evidence="1">3.5.4.25</ecNumber>
    </recommendedName>
    <alternativeName>
        <fullName evidence="1">GTP cyclohydrolase II</fullName>
    </alternativeName>
</protein>
<proteinExistence type="inferred from homology"/>
<feature type="chain" id="PRO_1000040592" description="GTP cyclohydrolase-2">
    <location>
        <begin position="1"/>
        <end position="196"/>
    </location>
</feature>
<feature type="active site" description="Proton acceptor" evidence="1">
    <location>
        <position position="126"/>
    </location>
</feature>
<feature type="active site" description="Nucleophile" evidence="1">
    <location>
        <position position="128"/>
    </location>
</feature>
<feature type="binding site" evidence="1">
    <location>
        <begin position="49"/>
        <end position="53"/>
    </location>
    <ligand>
        <name>GTP</name>
        <dbReference type="ChEBI" id="CHEBI:37565"/>
    </ligand>
</feature>
<feature type="binding site" evidence="1">
    <location>
        <position position="54"/>
    </location>
    <ligand>
        <name>Zn(2+)</name>
        <dbReference type="ChEBI" id="CHEBI:29105"/>
        <note>catalytic</note>
    </ligand>
</feature>
<feature type="binding site" evidence="1">
    <location>
        <position position="65"/>
    </location>
    <ligand>
        <name>Zn(2+)</name>
        <dbReference type="ChEBI" id="CHEBI:29105"/>
        <note>catalytic</note>
    </ligand>
</feature>
<feature type="binding site" evidence="1">
    <location>
        <position position="67"/>
    </location>
    <ligand>
        <name>Zn(2+)</name>
        <dbReference type="ChEBI" id="CHEBI:29105"/>
        <note>catalytic</note>
    </ligand>
</feature>
<feature type="binding site" evidence="1">
    <location>
        <position position="70"/>
    </location>
    <ligand>
        <name>GTP</name>
        <dbReference type="ChEBI" id="CHEBI:37565"/>
    </ligand>
</feature>
<feature type="binding site" evidence="1">
    <location>
        <begin position="92"/>
        <end position="94"/>
    </location>
    <ligand>
        <name>GTP</name>
        <dbReference type="ChEBI" id="CHEBI:37565"/>
    </ligand>
</feature>
<feature type="binding site" evidence="1">
    <location>
        <position position="114"/>
    </location>
    <ligand>
        <name>GTP</name>
        <dbReference type="ChEBI" id="CHEBI:37565"/>
    </ligand>
</feature>
<feature type="binding site" evidence="1">
    <location>
        <position position="149"/>
    </location>
    <ligand>
        <name>GTP</name>
        <dbReference type="ChEBI" id="CHEBI:37565"/>
    </ligand>
</feature>
<feature type="binding site" evidence="1">
    <location>
        <position position="154"/>
    </location>
    <ligand>
        <name>GTP</name>
        <dbReference type="ChEBI" id="CHEBI:37565"/>
    </ligand>
</feature>
<gene>
    <name evidence="1" type="primary">ribA</name>
    <name type="ordered locus">SSON_1863</name>
</gene>